<proteinExistence type="inferred from homology"/>
<name>RR15_MESVI</name>
<accession>Q9MUK9</accession>
<protein>
    <recommendedName>
        <fullName evidence="2">Small ribosomal subunit protein uS15c</fullName>
    </recommendedName>
    <alternativeName>
        <fullName>30S ribosomal protein S15, chloroplastic</fullName>
    </alternativeName>
</protein>
<organism>
    <name type="scientific">Mesostigma viride</name>
    <name type="common">Green alga</name>
    <dbReference type="NCBI Taxonomy" id="41882"/>
    <lineage>
        <taxon>Eukaryota</taxon>
        <taxon>Viridiplantae</taxon>
        <taxon>Streptophyta</taxon>
        <taxon>Mesostigmatophyceae</taxon>
        <taxon>Mesostigmatales</taxon>
        <taxon>Mesostigmataceae</taxon>
        <taxon>Mesostigma</taxon>
    </lineage>
</organism>
<geneLocation type="chloroplast"/>
<keyword id="KW-0150">Chloroplast</keyword>
<keyword id="KW-0934">Plastid</keyword>
<keyword id="KW-0687">Ribonucleoprotein</keyword>
<keyword id="KW-0689">Ribosomal protein</keyword>
<sequence>MLKKKIIKTHANHTNDTGSTQVQVSLLSSRVAQLTKHLNNHKNDYSSQRGLKKLLGQRKRLLKYLFVKDPLGYNNLIIQLGIRPGKSLVN</sequence>
<feature type="chain" id="PRO_0000115636" description="Small ribosomal subunit protein uS15c">
    <location>
        <begin position="1"/>
        <end position="90"/>
    </location>
</feature>
<gene>
    <name type="primary">rps15</name>
</gene>
<comment type="subunit">
    <text evidence="1">Part of the 30S ribosomal subunit.</text>
</comment>
<comment type="subcellular location">
    <subcellularLocation>
        <location>Plastid</location>
        <location>Chloroplast</location>
    </subcellularLocation>
</comment>
<comment type="similarity">
    <text evidence="2">Belongs to the universal ribosomal protein uS15 family.</text>
</comment>
<dbReference type="EMBL" id="AF166114">
    <property type="protein sequence ID" value="AAF43889.1"/>
    <property type="molecule type" value="Genomic_DNA"/>
</dbReference>
<dbReference type="RefSeq" id="NP_038451.1">
    <property type="nucleotide sequence ID" value="NC_002186.1"/>
</dbReference>
<dbReference type="SMR" id="Q9MUK9"/>
<dbReference type="GeneID" id="800984"/>
<dbReference type="GO" id="GO:0009507">
    <property type="term" value="C:chloroplast"/>
    <property type="evidence" value="ECO:0007669"/>
    <property type="project" value="UniProtKB-SubCell"/>
</dbReference>
<dbReference type="GO" id="GO:1990904">
    <property type="term" value="C:ribonucleoprotein complex"/>
    <property type="evidence" value="ECO:0007669"/>
    <property type="project" value="UniProtKB-KW"/>
</dbReference>
<dbReference type="GO" id="GO:0005840">
    <property type="term" value="C:ribosome"/>
    <property type="evidence" value="ECO:0007669"/>
    <property type="project" value="UniProtKB-KW"/>
</dbReference>
<dbReference type="GO" id="GO:0003735">
    <property type="term" value="F:structural constituent of ribosome"/>
    <property type="evidence" value="ECO:0007669"/>
    <property type="project" value="InterPro"/>
</dbReference>
<dbReference type="GO" id="GO:0006412">
    <property type="term" value="P:translation"/>
    <property type="evidence" value="ECO:0007669"/>
    <property type="project" value="UniProtKB-UniRule"/>
</dbReference>
<dbReference type="CDD" id="cd00353">
    <property type="entry name" value="Ribosomal_S15p_S13e"/>
    <property type="match status" value="1"/>
</dbReference>
<dbReference type="Gene3D" id="6.10.250.3130">
    <property type="match status" value="1"/>
</dbReference>
<dbReference type="Gene3D" id="1.10.287.10">
    <property type="entry name" value="S15/NS1, RNA-binding"/>
    <property type="match status" value="1"/>
</dbReference>
<dbReference type="HAMAP" id="MF_01343_B">
    <property type="entry name" value="Ribosomal_uS15_B"/>
    <property type="match status" value="1"/>
</dbReference>
<dbReference type="InterPro" id="IPR000589">
    <property type="entry name" value="Ribosomal_uS15"/>
</dbReference>
<dbReference type="InterPro" id="IPR005290">
    <property type="entry name" value="Ribosomal_uS15_bac-type"/>
</dbReference>
<dbReference type="InterPro" id="IPR009068">
    <property type="entry name" value="uS15_NS1_RNA-bd_sf"/>
</dbReference>
<dbReference type="NCBIfam" id="TIGR00952">
    <property type="entry name" value="S15_bact"/>
    <property type="match status" value="1"/>
</dbReference>
<dbReference type="PANTHER" id="PTHR23321">
    <property type="entry name" value="RIBOSOMAL PROTEIN S15, BACTERIAL AND ORGANELLAR"/>
    <property type="match status" value="1"/>
</dbReference>
<dbReference type="PANTHER" id="PTHR23321:SF26">
    <property type="entry name" value="SMALL RIBOSOMAL SUBUNIT PROTEIN US15M"/>
    <property type="match status" value="1"/>
</dbReference>
<dbReference type="Pfam" id="PF00312">
    <property type="entry name" value="Ribosomal_S15"/>
    <property type="match status" value="1"/>
</dbReference>
<dbReference type="SMART" id="SM01387">
    <property type="entry name" value="Ribosomal_S15"/>
    <property type="match status" value="1"/>
</dbReference>
<dbReference type="SUPFAM" id="SSF47060">
    <property type="entry name" value="S15/NS1 RNA-binding domain"/>
    <property type="match status" value="1"/>
</dbReference>
<dbReference type="PROSITE" id="PS00362">
    <property type="entry name" value="RIBOSOMAL_S15"/>
    <property type="match status" value="1"/>
</dbReference>
<reference key="1">
    <citation type="journal article" date="2000" name="Nature">
        <title>Ancestral chloroplast genome in Mesostigma viride reveals an early branch of green plant evolution.</title>
        <authorList>
            <person name="Lemieux C."/>
            <person name="Otis C."/>
            <person name="Turmel M."/>
        </authorList>
    </citation>
    <scope>NUCLEOTIDE SEQUENCE [LARGE SCALE GENOMIC DNA]</scope>
    <source>
        <strain>NIES-296 / KY-14 / CCMP 2046</strain>
    </source>
</reference>
<evidence type="ECO:0000250" key="1"/>
<evidence type="ECO:0000305" key="2"/>